<comment type="function">
    <text evidence="1">Catalyzes the oxidation of 5,10-methylenetetrahydrofolate to 5,10-methenyltetrahydrofolate and then the hydrolysis of 5,10-methenyltetrahydrofolate to 10-formyltetrahydrofolate.</text>
</comment>
<comment type="catalytic activity">
    <reaction evidence="1">
        <text>(6R)-5,10-methylene-5,6,7,8-tetrahydrofolate + NADP(+) = (6R)-5,10-methenyltetrahydrofolate + NADPH</text>
        <dbReference type="Rhea" id="RHEA:22812"/>
        <dbReference type="ChEBI" id="CHEBI:15636"/>
        <dbReference type="ChEBI" id="CHEBI:57455"/>
        <dbReference type="ChEBI" id="CHEBI:57783"/>
        <dbReference type="ChEBI" id="CHEBI:58349"/>
        <dbReference type="EC" id="1.5.1.5"/>
    </reaction>
</comment>
<comment type="catalytic activity">
    <reaction evidence="1">
        <text>(6R)-5,10-methenyltetrahydrofolate + H2O = (6R)-10-formyltetrahydrofolate + H(+)</text>
        <dbReference type="Rhea" id="RHEA:23700"/>
        <dbReference type="ChEBI" id="CHEBI:15377"/>
        <dbReference type="ChEBI" id="CHEBI:15378"/>
        <dbReference type="ChEBI" id="CHEBI:57455"/>
        <dbReference type="ChEBI" id="CHEBI:195366"/>
        <dbReference type="EC" id="3.5.4.9"/>
    </reaction>
</comment>
<comment type="pathway">
    <text evidence="1">One-carbon metabolism; tetrahydrofolate interconversion.</text>
</comment>
<comment type="subunit">
    <text evidence="1">Homodimer.</text>
</comment>
<comment type="similarity">
    <text evidence="1">Belongs to the tetrahydrofolate dehydrogenase/cyclohydrolase family.</text>
</comment>
<keyword id="KW-0028">Amino-acid biosynthesis</keyword>
<keyword id="KW-0368">Histidine biosynthesis</keyword>
<keyword id="KW-0378">Hydrolase</keyword>
<keyword id="KW-0486">Methionine biosynthesis</keyword>
<keyword id="KW-0511">Multifunctional enzyme</keyword>
<keyword id="KW-0521">NADP</keyword>
<keyword id="KW-0554">One-carbon metabolism</keyword>
<keyword id="KW-0560">Oxidoreductase</keyword>
<keyword id="KW-0658">Purine biosynthesis</keyword>
<keyword id="KW-1185">Reference proteome</keyword>
<evidence type="ECO:0000255" key="1">
    <source>
        <dbReference type="HAMAP-Rule" id="MF_01576"/>
    </source>
</evidence>
<name>FOLD_OENOB</name>
<gene>
    <name evidence="1" type="primary">folD</name>
    <name type="ordered locus">OEOE_0943</name>
</gene>
<sequence length="285" mass="31225">MVQILDGRSVSKKILQEVKDKVAKAGFPVKLATIYNEENEGSKMYVGMKIRRATFAGLISVEYKVDNSWKTDDILRLLSKLNMDSSICGILVQSPLGDGIDESKIFNAIDPLKDADGLSAFNQGLLFENAKENYIVPATPAGVISLLEAYHYQFAAKNALVVGRSVLFGRPMSVLLTNRDMTVTLAHSKTPVDQLRQFAKRADLIVVAIGKANWFQFTDLKKDVVVIDVGANKLNGHATGDVDFEKVYPHVSQISPVPGGVGPMTIATLIKHTFDLAVFQQGEQK</sequence>
<accession>Q04FB7</accession>
<dbReference type="EC" id="1.5.1.5" evidence="1"/>
<dbReference type="EC" id="3.5.4.9" evidence="1"/>
<dbReference type="EMBL" id="CP000411">
    <property type="protein sequence ID" value="ABJ56855.1"/>
    <property type="molecule type" value="Genomic_DNA"/>
</dbReference>
<dbReference type="RefSeq" id="WP_002821793.1">
    <property type="nucleotide sequence ID" value="NC_008528.1"/>
</dbReference>
<dbReference type="SMR" id="Q04FB7"/>
<dbReference type="STRING" id="203123.OEOE_0943"/>
<dbReference type="KEGG" id="ooe:OEOE_0943"/>
<dbReference type="PATRIC" id="fig|203123.7.peg.957"/>
<dbReference type="eggNOG" id="COG0190">
    <property type="taxonomic scope" value="Bacteria"/>
</dbReference>
<dbReference type="HOGENOM" id="CLU_034045_2_0_9"/>
<dbReference type="UniPathway" id="UPA00193"/>
<dbReference type="Proteomes" id="UP000000774">
    <property type="component" value="Chromosome"/>
</dbReference>
<dbReference type="GO" id="GO:0005829">
    <property type="term" value="C:cytosol"/>
    <property type="evidence" value="ECO:0007669"/>
    <property type="project" value="TreeGrafter"/>
</dbReference>
<dbReference type="GO" id="GO:0004477">
    <property type="term" value="F:methenyltetrahydrofolate cyclohydrolase activity"/>
    <property type="evidence" value="ECO:0007669"/>
    <property type="project" value="UniProtKB-UniRule"/>
</dbReference>
<dbReference type="GO" id="GO:0004488">
    <property type="term" value="F:methylenetetrahydrofolate dehydrogenase (NADP+) activity"/>
    <property type="evidence" value="ECO:0007669"/>
    <property type="project" value="UniProtKB-UniRule"/>
</dbReference>
<dbReference type="GO" id="GO:0000105">
    <property type="term" value="P:L-histidine biosynthetic process"/>
    <property type="evidence" value="ECO:0007669"/>
    <property type="project" value="UniProtKB-KW"/>
</dbReference>
<dbReference type="GO" id="GO:0009086">
    <property type="term" value="P:methionine biosynthetic process"/>
    <property type="evidence" value="ECO:0007669"/>
    <property type="project" value="UniProtKB-KW"/>
</dbReference>
<dbReference type="GO" id="GO:0006164">
    <property type="term" value="P:purine nucleotide biosynthetic process"/>
    <property type="evidence" value="ECO:0007669"/>
    <property type="project" value="UniProtKB-KW"/>
</dbReference>
<dbReference type="GO" id="GO:0035999">
    <property type="term" value="P:tetrahydrofolate interconversion"/>
    <property type="evidence" value="ECO:0007669"/>
    <property type="project" value="UniProtKB-UniRule"/>
</dbReference>
<dbReference type="CDD" id="cd01080">
    <property type="entry name" value="NAD_bind_m-THF_DH_Cyclohyd"/>
    <property type="match status" value="1"/>
</dbReference>
<dbReference type="Gene3D" id="3.40.50.10860">
    <property type="entry name" value="Leucine Dehydrogenase, chain A, domain 1"/>
    <property type="match status" value="1"/>
</dbReference>
<dbReference type="Gene3D" id="3.40.50.720">
    <property type="entry name" value="NAD(P)-binding Rossmann-like Domain"/>
    <property type="match status" value="1"/>
</dbReference>
<dbReference type="HAMAP" id="MF_01576">
    <property type="entry name" value="THF_DHG_CYH"/>
    <property type="match status" value="1"/>
</dbReference>
<dbReference type="InterPro" id="IPR046346">
    <property type="entry name" value="Aminoacid_DH-like_N_sf"/>
</dbReference>
<dbReference type="InterPro" id="IPR036291">
    <property type="entry name" value="NAD(P)-bd_dom_sf"/>
</dbReference>
<dbReference type="InterPro" id="IPR000672">
    <property type="entry name" value="THF_DH/CycHdrlase"/>
</dbReference>
<dbReference type="InterPro" id="IPR020630">
    <property type="entry name" value="THF_DH/CycHdrlase_cat_dom"/>
</dbReference>
<dbReference type="InterPro" id="IPR020867">
    <property type="entry name" value="THF_DH/CycHdrlase_CS"/>
</dbReference>
<dbReference type="InterPro" id="IPR020631">
    <property type="entry name" value="THF_DH/CycHdrlase_NAD-bd_dom"/>
</dbReference>
<dbReference type="PANTHER" id="PTHR48099:SF5">
    <property type="entry name" value="C-1-TETRAHYDROFOLATE SYNTHASE, CYTOPLASMIC"/>
    <property type="match status" value="1"/>
</dbReference>
<dbReference type="PANTHER" id="PTHR48099">
    <property type="entry name" value="C-1-TETRAHYDROFOLATE SYNTHASE, CYTOPLASMIC-RELATED"/>
    <property type="match status" value="1"/>
</dbReference>
<dbReference type="Pfam" id="PF00763">
    <property type="entry name" value="THF_DHG_CYH"/>
    <property type="match status" value="1"/>
</dbReference>
<dbReference type="Pfam" id="PF02882">
    <property type="entry name" value="THF_DHG_CYH_C"/>
    <property type="match status" value="1"/>
</dbReference>
<dbReference type="PRINTS" id="PR00085">
    <property type="entry name" value="THFDHDRGNASE"/>
</dbReference>
<dbReference type="SUPFAM" id="SSF53223">
    <property type="entry name" value="Aminoacid dehydrogenase-like, N-terminal domain"/>
    <property type="match status" value="1"/>
</dbReference>
<dbReference type="SUPFAM" id="SSF51735">
    <property type="entry name" value="NAD(P)-binding Rossmann-fold domains"/>
    <property type="match status" value="1"/>
</dbReference>
<dbReference type="PROSITE" id="PS00767">
    <property type="entry name" value="THF_DHG_CYH_2"/>
    <property type="match status" value="1"/>
</dbReference>
<protein>
    <recommendedName>
        <fullName evidence="1">Bifunctional protein FolD</fullName>
    </recommendedName>
    <domain>
        <recommendedName>
            <fullName evidence="1">Methylenetetrahydrofolate dehydrogenase</fullName>
            <ecNumber evidence="1">1.5.1.5</ecNumber>
        </recommendedName>
    </domain>
    <domain>
        <recommendedName>
            <fullName evidence="1">Methenyltetrahydrofolate cyclohydrolase</fullName>
            <ecNumber evidence="1">3.5.4.9</ecNumber>
        </recommendedName>
    </domain>
</protein>
<organism>
    <name type="scientific">Oenococcus oeni (strain ATCC BAA-331 / PSU-1)</name>
    <dbReference type="NCBI Taxonomy" id="203123"/>
    <lineage>
        <taxon>Bacteria</taxon>
        <taxon>Bacillati</taxon>
        <taxon>Bacillota</taxon>
        <taxon>Bacilli</taxon>
        <taxon>Lactobacillales</taxon>
        <taxon>Lactobacillaceae</taxon>
        <taxon>Oenococcus</taxon>
    </lineage>
</organism>
<feature type="chain" id="PRO_0000305855" description="Bifunctional protein FolD">
    <location>
        <begin position="1"/>
        <end position="285"/>
    </location>
</feature>
<feature type="binding site" evidence="1">
    <location>
        <begin position="163"/>
        <end position="165"/>
    </location>
    <ligand>
        <name>NADP(+)</name>
        <dbReference type="ChEBI" id="CHEBI:58349"/>
    </ligand>
</feature>
<feature type="binding site" evidence="1">
    <location>
        <position position="188"/>
    </location>
    <ligand>
        <name>NADP(+)</name>
        <dbReference type="ChEBI" id="CHEBI:58349"/>
    </ligand>
</feature>
<feature type="binding site" evidence="1">
    <location>
        <position position="231"/>
    </location>
    <ligand>
        <name>NADP(+)</name>
        <dbReference type="ChEBI" id="CHEBI:58349"/>
    </ligand>
</feature>
<reference key="1">
    <citation type="journal article" date="2006" name="Proc. Natl. Acad. Sci. U.S.A.">
        <title>Comparative genomics of the lactic acid bacteria.</title>
        <authorList>
            <person name="Makarova K.S."/>
            <person name="Slesarev A."/>
            <person name="Wolf Y.I."/>
            <person name="Sorokin A."/>
            <person name="Mirkin B."/>
            <person name="Koonin E.V."/>
            <person name="Pavlov A."/>
            <person name="Pavlova N."/>
            <person name="Karamychev V."/>
            <person name="Polouchine N."/>
            <person name="Shakhova V."/>
            <person name="Grigoriev I."/>
            <person name="Lou Y."/>
            <person name="Rohksar D."/>
            <person name="Lucas S."/>
            <person name="Huang K."/>
            <person name="Goodstein D.M."/>
            <person name="Hawkins T."/>
            <person name="Plengvidhya V."/>
            <person name="Welker D."/>
            <person name="Hughes J."/>
            <person name="Goh Y."/>
            <person name="Benson A."/>
            <person name="Baldwin K."/>
            <person name="Lee J.-H."/>
            <person name="Diaz-Muniz I."/>
            <person name="Dosti B."/>
            <person name="Smeianov V."/>
            <person name="Wechter W."/>
            <person name="Barabote R."/>
            <person name="Lorca G."/>
            <person name="Altermann E."/>
            <person name="Barrangou R."/>
            <person name="Ganesan B."/>
            <person name="Xie Y."/>
            <person name="Rawsthorne H."/>
            <person name="Tamir D."/>
            <person name="Parker C."/>
            <person name="Breidt F."/>
            <person name="Broadbent J.R."/>
            <person name="Hutkins R."/>
            <person name="O'Sullivan D."/>
            <person name="Steele J."/>
            <person name="Unlu G."/>
            <person name="Saier M.H. Jr."/>
            <person name="Klaenhammer T."/>
            <person name="Richardson P."/>
            <person name="Kozyavkin S."/>
            <person name="Weimer B.C."/>
            <person name="Mills D.A."/>
        </authorList>
    </citation>
    <scope>NUCLEOTIDE SEQUENCE [LARGE SCALE GENOMIC DNA]</scope>
    <source>
        <strain>ATCC BAA-331 / PSU-1</strain>
    </source>
</reference>
<proteinExistence type="inferred from homology"/>